<dbReference type="EMBL" id="BA000023">
    <property type="protein sequence ID" value="BAK54275.1"/>
    <property type="molecule type" value="Genomic_DNA"/>
</dbReference>
<dbReference type="RefSeq" id="WP_052846880.1">
    <property type="nucleotide sequence ID" value="NC_003106.2"/>
</dbReference>
<dbReference type="SMR" id="Q975I9"/>
<dbReference type="STRING" id="273063.STK_04230"/>
<dbReference type="GeneID" id="1458358"/>
<dbReference type="KEGG" id="sto:STK_04230"/>
<dbReference type="PATRIC" id="fig|273063.9.peg.491"/>
<dbReference type="eggNOG" id="arCOG04096">
    <property type="taxonomic scope" value="Archaea"/>
</dbReference>
<dbReference type="OrthoDB" id="10698at2157"/>
<dbReference type="Proteomes" id="UP000001015">
    <property type="component" value="Chromosome"/>
</dbReference>
<dbReference type="GO" id="GO:0022627">
    <property type="term" value="C:cytosolic small ribosomal subunit"/>
    <property type="evidence" value="ECO:0007669"/>
    <property type="project" value="TreeGrafter"/>
</dbReference>
<dbReference type="GO" id="GO:0019843">
    <property type="term" value="F:rRNA binding"/>
    <property type="evidence" value="ECO:0007669"/>
    <property type="project" value="UniProtKB-UniRule"/>
</dbReference>
<dbReference type="GO" id="GO:0003735">
    <property type="term" value="F:structural constituent of ribosome"/>
    <property type="evidence" value="ECO:0007669"/>
    <property type="project" value="InterPro"/>
</dbReference>
<dbReference type="GO" id="GO:0006412">
    <property type="term" value="P:translation"/>
    <property type="evidence" value="ECO:0007669"/>
    <property type="project" value="UniProtKB-UniRule"/>
</dbReference>
<dbReference type="CDD" id="cd00364">
    <property type="entry name" value="Ribosomal_uS17"/>
    <property type="match status" value="1"/>
</dbReference>
<dbReference type="Gene3D" id="2.40.50.1000">
    <property type="match status" value="1"/>
</dbReference>
<dbReference type="HAMAP" id="MF_01345_A">
    <property type="entry name" value="Ribosomal_uS17_A"/>
    <property type="match status" value="1"/>
</dbReference>
<dbReference type="InterPro" id="IPR012340">
    <property type="entry name" value="NA-bd_OB-fold"/>
</dbReference>
<dbReference type="InterPro" id="IPR000266">
    <property type="entry name" value="Ribosomal_uS17"/>
</dbReference>
<dbReference type="InterPro" id="IPR028333">
    <property type="entry name" value="Ribosomal_uS17_arc/euk"/>
</dbReference>
<dbReference type="InterPro" id="IPR019978">
    <property type="entry name" value="Ribosomal_uS17_archaeal"/>
</dbReference>
<dbReference type="NCBIfam" id="NF006345">
    <property type="entry name" value="PRK08572.1"/>
    <property type="match status" value="1"/>
</dbReference>
<dbReference type="NCBIfam" id="TIGR03630">
    <property type="entry name" value="uS17_arch"/>
    <property type="match status" value="1"/>
</dbReference>
<dbReference type="PANTHER" id="PTHR10744">
    <property type="entry name" value="40S RIBOSOMAL PROTEIN S11 FAMILY MEMBER"/>
    <property type="match status" value="1"/>
</dbReference>
<dbReference type="PANTHER" id="PTHR10744:SF9">
    <property type="entry name" value="40S RIBOSOMAL PROTEIN S11-RELATED"/>
    <property type="match status" value="1"/>
</dbReference>
<dbReference type="Pfam" id="PF00366">
    <property type="entry name" value="Ribosomal_S17"/>
    <property type="match status" value="1"/>
</dbReference>
<dbReference type="PRINTS" id="PR00973">
    <property type="entry name" value="RIBOSOMALS17"/>
</dbReference>
<dbReference type="SUPFAM" id="SSF50249">
    <property type="entry name" value="Nucleic acid-binding proteins"/>
    <property type="match status" value="1"/>
</dbReference>
<accession>Q975I9</accession>
<accession>F9VMX8</accession>
<protein>
    <recommendedName>
        <fullName evidence="1">Small ribosomal subunit protein uS17</fullName>
    </recommendedName>
    <alternativeName>
        <fullName evidence="2">30S ribosomal protein S17</fullName>
    </alternativeName>
</protein>
<gene>
    <name evidence="1" type="primary">rps17</name>
    <name type="ordered locus">STK_04230</name>
</gene>
<organism>
    <name type="scientific">Sulfurisphaera tokodaii (strain DSM 16993 / JCM 10545 / NBRC 100140 / 7)</name>
    <name type="common">Sulfolobus tokodaii</name>
    <dbReference type="NCBI Taxonomy" id="273063"/>
    <lineage>
        <taxon>Archaea</taxon>
        <taxon>Thermoproteota</taxon>
        <taxon>Thermoprotei</taxon>
        <taxon>Sulfolobales</taxon>
        <taxon>Sulfolobaceae</taxon>
        <taxon>Sulfurisphaera</taxon>
    </lineage>
</organism>
<reference key="1">
    <citation type="journal article" date="2001" name="DNA Res.">
        <title>Complete genome sequence of an aerobic thermoacidophilic Crenarchaeon, Sulfolobus tokodaii strain7.</title>
        <authorList>
            <person name="Kawarabayasi Y."/>
            <person name="Hino Y."/>
            <person name="Horikawa H."/>
            <person name="Jin-no K."/>
            <person name="Takahashi M."/>
            <person name="Sekine M."/>
            <person name="Baba S."/>
            <person name="Ankai A."/>
            <person name="Kosugi H."/>
            <person name="Hosoyama A."/>
            <person name="Fukui S."/>
            <person name="Nagai Y."/>
            <person name="Nishijima K."/>
            <person name="Otsuka R."/>
            <person name="Nakazawa H."/>
            <person name="Takamiya M."/>
            <person name="Kato Y."/>
            <person name="Yoshizawa T."/>
            <person name="Tanaka T."/>
            <person name="Kudoh Y."/>
            <person name="Yamazaki J."/>
            <person name="Kushida N."/>
            <person name="Oguchi A."/>
            <person name="Aoki K."/>
            <person name="Masuda S."/>
            <person name="Yanagii M."/>
            <person name="Nishimura M."/>
            <person name="Yamagishi A."/>
            <person name="Oshima T."/>
            <person name="Kikuchi H."/>
        </authorList>
    </citation>
    <scope>NUCLEOTIDE SEQUENCE [LARGE SCALE GENOMIC DNA]</scope>
    <source>
        <strain>DSM 16993 / JCM 10545 / NBRC 100140 / 7</strain>
    </source>
</reference>
<sequence length="113" mass="12924">MGKKGALVKNIGIEGVNPPSKTCDDINCPFHGNLRVRGIILEGRLIRYRAEKTGVVERDYLFYDTKYKRYERRRSRIHVHIPPCLDVKEGDNVIIAECRPIAKSVSFVVIGKR</sequence>
<comment type="function">
    <text evidence="1">One of the primary rRNA binding proteins, it binds specifically to the 5'-end of 16S ribosomal RNA.</text>
</comment>
<comment type="subunit">
    <text evidence="1">Part of the 30S ribosomal subunit.</text>
</comment>
<comment type="similarity">
    <text evidence="1">Belongs to the universal ribosomal protein uS17 family.</text>
</comment>
<feature type="chain" id="PRO_0000232618" description="Small ribosomal subunit protein uS17">
    <location>
        <begin position="1"/>
        <end position="113"/>
    </location>
</feature>
<name>RS17_SULTO</name>
<keyword id="KW-1185">Reference proteome</keyword>
<keyword id="KW-0687">Ribonucleoprotein</keyword>
<keyword id="KW-0689">Ribosomal protein</keyword>
<keyword id="KW-0694">RNA-binding</keyword>
<keyword id="KW-0699">rRNA-binding</keyword>
<evidence type="ECO:0000255" key="1">
    <source>
        <dbReference type="HAMAP-Rule" id="MF_01345"/>
    </source>
</evidence>
<evidence type="ECO:0000305" key="2"/>
<proteinExistence type="inferred from homology"/>